<reference key="1">
    <citation type="submission" date="2009-01" db="EMBL/GenBank/DDBJ databases">
        <title>Complete sequence of chromosome of Methylobacterium nodulans ORS 2060.</title>
        <authorList>
            <consortium name="US DOE Joint Genome Institute"/>
            <person name="Lucas S."/>
            <person name="Copeland A."/>
            <person name="Lapidus A."/>
            <person name="Glavina del Rio T."/>
            <person name="Dalin E."/>
            <person name="Tice H."/>
            <person name="Bruce D."/>
            <person name="Goodwin L."/>
            <person name="Pitluck S."/>
            <person name="Sims D."/>
            <person name="Brettin T."/>
            <person name="Detter J.C."/>
            <person name="Han C."/>
            <person name="Larimer F."/>
            <person name="Land M."/>
            <person name="Hauser L."/>
            <person name="Kyrpides N."/>
            <person name="Ivanova N."/>
            <person name="Marx C.J."/>
            <person name="Richardson P."/>
        </authorList>
    </citation>
    <scope>NUCLEOTIDE SEQUENCE [LARGE SCALE GENOMIC DNA]</scope>
    <source>
        <strain>LMG 21967 / CNCM I-2342 / ORS 2060</strain>
    </source>
</reference>
<proteinExistence type="inferred from homology"/>
<name>SAHH_METNO</name>
<comment type="function">
    <text evidence="1">May play a key role in the regulation of the intracellular concentration of adenosylhomocysteine.</text>
</comment>
<comment type="catalytic activity">
    <reaction evidence="1">
        <text>S-adenosyl-L-homocysteine + H2O = L-homocysteine + adenosine</text>
        <dbReference type="Rhea" id="RHEA:21708"/>
        <dbReference type="ChEBI" id="CHEBI:15377"/>
        <dbReference type="ChEBI" id="CHEBI:16335"/>
        <dbReference type="ChEBI" id="CHEBI:57856"/>
        <dbReference type="ChEBI" id="CHEBI:58199"/>
        <dbReference type="EC" id="3.13.2.1"/>
    </reaction>
</comment>
<comment type="cofactor">
    <cofactor evidence="1">
        <name>NAD(+)</name>
        <dbReference type="ChEBI" id="CHEBI:57540"/>
    </cofactor>
    <text evidence="1">Binds 1 NAD(+) per subunit.</text>
</comment>
<comment type="pathway">
    <text evidence="1">Amino-acid biosynthesis; L-homocysteine biosynthesis; L-homocysteine from S-adenosyl-L-homocysteine: step 1/1.</text>
</comment>
<comment type="subcellular location">
    <subcellularLocation>
        <location evidence="1">Cytoplasm</location>
    </subcellularLocation>
</comment>
<comment type="similarity">
    <text evidence="1">Belongs to the adenosylhomocysteinase family.</text>
</comment>
<protein>
    <recommendedName>
        <fullName evidence="1">Adenosylhomocysteinase</fullName>
        <ecNumber evidence="1">3.13.2.1</ecNumber>
    </recommendedName>
    <alternativeName>
        <fullName evidence="1">S-adenosyl-L-homocysteine hydrolase</fullName>
        <shortName evidence="1">AdoHcyase</shortName>
    </alternativeName>
</protein>
<organism>
    <name type="scientific">Methylobacterium nodulans (strain LMG 21967 / CNCM I-2342 / ORS 2060)</name>
    <dbReference type="NCBI Taxonomy" id="460265"/>
    <lineage>
        <taxon>Bacteria</taxon>
        <taxon>Pseudomonadati</taxon>
        <taxon>Pseudomonadota</taxon>
        <taxon>Alphaproteobacteria</taxon>
        <taxon>Hyphomicrobiales</taxon>
        <taxon>Methylobacteriaceae</taxon>
        <taxon>Methylobacterium</taxon>
    </lineage>
</organism>
<keyword id="KW-0963">Cytoplasm</keyword>
<keyword id="KW-0378">Hydrolase</keyword>
<keyword id="KW-0520">NAD</keyword>
<keyword id="KW-0554">One-carbon metabolism</keyword>
<keyword id="KW-1185">Reference proteome</keyword>
<gene>
    <name evidence="1" type="primary">ahcY</name>
    <name type="ordered locus">Mnod_1604</name>
</gene>
<dbReference type="EC" id="3.13.2.1" evidence="1"/>
<dbReference type="EMBL" id="CP001349">
    <property type="protein sequence ID" value="ACL56594.1"/>
    <property type="molecule type" value="Genomic_DNA"/>
</dbReference>
<dbReference type="RefSeq" id="WP_015928289.1">
    <property type="nucleotide sequence ID" value="NC_011894.1"/>
</dbReference>
<dbReference type="SMR" id="B8IPU4"/>
<dbReference type="STRING" id="460265.Mnod_1604"/>
<dbReference type="KEGG" id="mno:Mnod_1604"/>
<dbReference type="eggNOG" id="COG0499">
    <property type="taxonomic scope" value="Bacteria"/>
</dbReference>
<dbReference type="HOGENOM" id="CLU_025194_2_1_5"/>
<dbReference type="OrthoDB" id="9802717at2"/>
<dbReference type="UniPathway" id="UPA00314">
    <property type="reaction ID" value="UER00076"/>
</dbReference>
<dbReference type="Proteomes" id="UP000008207">
    <property type="component" value="Chromosome"/>
</dbReference>
<dbReference type="GO" id="GO:0005829">
    <property type="term" value="C:cytosol"/>
    <property type="evidence" value="ECO:0007669"/>
    <property type="project" value="TreeGrafter"/>
</dbReference>
<dbReference type="GO" id="GO:0004013">
    <property type="term" value="F:adenosylhomocysteinase activity"/>
    <property type="evidence" value="ECO:0007669"/>
    <property type="project" value="UniProtKB-UniRule"/>
</dbReference>
<dbReference type="GO" id="GO:0071269">
    <property type="term" value="P:L-homocysteine biosynthetic process"/>
    <property type="evidence" value="ECO:0007669"/>
    <property type="project" value="UniProtKB-UniRule"/>
</dbReference>
<dbReference type="GO" id="GO:0006730">
    <property type="term" value="P:one-carbon metabolic process"/>
    <property type="evidence" value="ECO:0007669"/>
    <property type="project" value="UniProtKB-KW"/>
</dbReference>
<dbReference type="GO" id="GO:0033353">
    <property type="term" value="P:S-adenosylmethionine cycle"/>
    <property type="evidence" value="ECO:0007669"/>
    <property type="project" value="TreeGrafter"/>
</dbReference>
<dbReference type="CDD" id="cd00401">
    <property type="entry name" value="SAHH"/>
    <property type="match status" value="1"/>
</dbReference>
<dbReference type="FunFam" id="3.40.50.720:FF:000004">
    <property type="entry name" value="Adenosylhomocysteinase"/>
    <property type="match status" value="1"/>
</dbReference>
<dbReference type="Gene3D" id="3.40.50.1480">
    <property type="entry name" value="Adenosylhomocysteinase-like"/>
    <property type="match status" value="1"/>
</dbReference>
<dbReference type="Gene3D" id="3.40.50.720">
    <property type="entry name" value="NAD(P)-binding Rossmann-like Domain"/>
    <property type="match status" value="1"/>
</dbReference>
<dbReference type="HAMAP" id="MF_00563">
    <property type="entry name" value="AdoHcyase"/>
    <property type="match status" value="1"/>
</dbReference>
<dbReference type="InterPro" id="IPR042172">
    <property type="entry name" value="Adenosylhomocyst_ase-like_sf"/>
</dbReference>
<dbReference type="InterPro" id="IPR000043">
    <property type="entry name" value="Adenosylhomocysteinase-like"/>
</dbReference>
<dbReference type="InterPro" id="IPR015878">
    <property type="entry name" value="Ado_hCys_hydrolase_NAD-bd"/>
</dbReference>
<dbReference type="InterPro" id="IPR036291">
    <property type="entry name" value="NAD(P)-bd_dom_sf"/>
</dbReference>
<dbReference type="InterPro" id="IPR020082">
    <property type="entry name" value="S-Ado-L-homoCys_hydrolase_CS"/>
</dbReference>
<dbReference type="NCBIfam" id="TIGR00936">
    <property type="entry name" value="ahcY"/>
    <property type="match status" value="1"/>
</dbReference>
<dbReference type="NCBIfam" id="NF004005">
    <property type="entry name" value="PRK05476.2-3"/>
    <property type="match status" value="1"/>
</dbReference>
<dbReference type="PANTHER" id="PTHR23420">
    <property type="entry name" value="ADENOSYLHOMOCYSTEINASE"/>
    <property type="match status" value="1"/>
</dbReference>
<dbReference type="PANTHER" id="PTHR23420:SF0">
    <property type="entry name" value="ADENOSYLHOMOCYSTEINASE"/>
    <property type="match status" value="1"/>
</dbReference>
<dbReference type="Pfam" id="PF05221">
    <property type="entry name" value="AdoHcyase"/>
    <property type="match status" value="1"/>
</dbReference>
<dbReference type="Pfam" id="PF00670">
    <property type="entry name" value="AdoHcyase_NAD"/>
    <property type="match status" value="1"/>
</dbReference>
<dbReference type="PIRSF" id="PIRSF001109">
    <property type="entry name" value="Ad_hcy_hydrolase"/>
    <property type="match status" value="1"/>
</dbReference>
<dbReference type="SMART" id="SM00996">
    <property type="entry name" value="AdoHcyase"/>
    <property type="match status" value="1"/>
</dbReference>
<dbReference type="SMART" id="SM00997">
    <property type="entry name" value="AdoHcyase_NAD"/>
    <property type="match status" value="1"/>
</dbReference>
<dbReference type="SUPFAM" id="SSF52283">
    <property type="entry name" value="Formate/glycerate dehydrogenase catalytic domain-like"/>
    <property type="match status" value="1"/>
</dbReference>
<dbReference type="SUPFAM" id="SSF51735">
    <property type="entry name" value="NAD(P)-binding Rossmann-fold domains"/>
    <property type="match status" value="1"/>
</dbReference>
<dbReference type="PROSITE" id="PS00738">
    <property type="entry name" value="ADOHCYASE_1"/>
    <property type="match status" value="1"/>
</dbReference>
<dbReference type="PROSITE" id="PS00739">
    <property type="entry name" value="ADOHCYASE_2"/>
    <property type="match status" value="1"/>
</dbReference>
<accession>B8IPU4</accession>
<sequence>MPSAQDYIVRDIGLADFGRKEIAIAETEMPGLMAVRREYAASQPLKGAKIAGSLHMTIQTAVLIETLKALGADIRWVSCNIYSTQDHAAAAIAAAGIPVFAVKGETLTEYWDYTAKLFEWHDGGMPNMILDDGGDATMFVHAGLRAERGDAVFLDKPGSEEEEIFFALIKRMLKEKPQGWFAGLAESIKGVSEETTTGVHRLYLLAREGKLLFPAINVNDSVTKSKFDNLYGCRESLVDGIRRGTDVMMAGKVAMVAGFGDVGKGSAASLRNAGCRVLVSEVDPICALQAAMEGYEVTTMEDAAPRADIFVTATGNKDVITLDHMRAMKDRAIVCNIGHFDNEIQVAGLRNLKWTNIKPQVDEIEFADGHRIILLSEGRLVNLGNAMGHPSFVMSASFTNQTLAQIELWTNQGKYDRQVYTLPKALDEKVAALHLEKIGVKLTKLRPDQAAYIGVSENGPFKPDHYRY</sequence>
<feature type="chain" id="PRO_1000196671" description="Adenosylhomocysteinase">
    <location>
        <begin position="1"/>
        <end position="468"/>
    </location>
</feature>
<feature type="binding site" evidence="1">
    <location>
        <position position="57"/>
    </location>
    <ligand>
        <name>substrate</name>
    </ligand>
</feature>
<feature type="binding site" evidence="1">
    <location>
        <position position="132"/>
    </location>
    <ligand>
        <name>substrate</name>
    </ligand>
</feature>
<feature type="binding site" evidence="1">
    <location>
        <position position="194"/>
    </location>
    <ligand>
        <name>substrate</name>
    </ligand>
</feature>
<feature type="binding site" evidence="1">
    <location>
        <begin position="195"/>
        <end position="197"/>
    </location>
    <ligand>
        <name>NAD(+)</name>
        <dbReference type="ChEBI" id="CHEBI:57540"/>
    </ligand>
</feature>
<feature type="binding site" evidence="1">
    <location>
        <position position="224"/>
    </location>
    <ligand>
        <name>substrate</name>
    </ligand>
</feature>
<feature type="binding site" evidence="1">
    <location>
        <position position="228"/>
    </location>
    <ligand>
        <name>substrate</name>
    </ligand>
</feature>
<feature type="binding site" evidence="1">
    <location>
        <position position="229"/>
    </location>
    <ligand>
        <name>NAD(+)</name>
        <dbReference type="ChEBI" id="CHEBI:57540"/>
    </ligand>
</feature>
<feature type="binding site" evidence="1">
    <location>
        <begin position="258"/>
        <end position="263"/>
    </location>
    <ligand>
        <name>NAD(+)</name>
        <dbReference type="ChEBI" id="CHEBI:57540"/>
    </ligand>
</feature>
<feature type="binding site" evidence="1">
    <location>
        <position position="281"/>
    </location>
    <ligand>
        <name>NAD(+)</name>
        <dbReference type="ChEBI" id="CHEBI:57540"/>
    </ligand>
</feature>
<feature type="binding site" evidence="1">
    <location>
        <position position="316"/>
    </location>
    <ligand>
        <name>NAD(+)</name>
        <dbReference type="ChEBI" id="CHEBI:57540"/>
    </ligand>
</feature>
<feature type="binding site" evidence="1">
    <location>
        <begin position="337"/>
        <end position="339"/>
    </location>
    <ligand>
        <name>NAD(+)</name>
        <dbReference type="ChEBI" id="CHEBI:57540"/>
    </ligand>
</feature>
<feature type="binding site" evidence="1">
    <location>
        <position position="382"/>
    </location>
    <ligand>
        <name>NAD(+)</name>
        <dbReference type="ChEBI" id="CHEBI:57540"/>
    </ligand>
</feature>
<evidence type="ECO:0000255" key="1">
    <source>
        <dbReference type="HAMAP-Rule" id="MF_00563"/>
    </source>
</evidence>